<gene>
    <name evidence="1" type="primary">cdd</name>
    <name type="ordered locus">ECH74115_3275</name>
</gene>
<comment type="function">
    <text evidence="1">This enzyme scavenges exogenous and endogenous cytidine and 2'-deoxycytidine for UMP synthesis.</text>
</comment>
<comment type="catalytic activity">
    <reaction evidence="1">
        <text>cytidine + H2O + H(+) = uridine + NH4(+)</text>
        <dbReference type="Rhea" id="RHEA:16069"/>
        <dbReference type="ChEBI" id="CHEBI:15377"/>
        <dbReference type="ChEBI" id="CHEBI:15378"/>
        <dbReference type="ChEBI" id="CHEBI:16704"/>
        <dbReference type="ChEBI" id="CHEBI:17562"/>
        <dbReference type="ChEBI" id="CHEBI:28938"/>
        <dbReference type="EC" id="3.5.4.5"/>
    </reaction>
</comment>
<comment type="catalytic activity">
    <reaction evidence="1">
        <text>2'-deoxycytidine + H2O + H(+) = 2'-deoxyuridine + NH4(+)</text>
        <dbReference type="Rhea" id="RHEA:13433"/>
        <dbReference type="ChEBI" id="CHEBI:15377"/>
        <dbReference type="ChEBI" id="CHEBI:15378"/>
        <dbReference type="ChEBI" id="CHEBI:15698"/>
        <dbReference type="ChEBI" id="CHEBI:16450"/>
        <dbReference type="ChEBI" id="CHEBI:28938"/>
        <dbReference type="EC" id="3.5.4.5"/>
    </reaction>
</comment>
<comment type="cofactor">
    <cofactor evidence="1">
        <name>Zn(2+)</name>
        <dbReference type="ChEBI" id="CHEBI:29105"/>
    </cofactor>
    <text evidence="1">Binds 1 zinc ion.</text>
</comment>
<comment type="subunit">
    <text evidence="1">Homodimer.</text>
</comment>
<comment type="similarity">
    <text evidence="1">Belongs to the cytidine and deoxycytidylate deaminase family.</text>
</comment>
<accession>B5YW75</accession>
<reference key="1">
    <citation type="journal article" date="2011" name="Proc. Natl. Acad. Sci. U.S.A.">
        <title>Genomic anatomy of Escherichia coli O157:H7 outbreaks.</title>
        <authorList>
            <person name="Eppinger M."/>
            <person name="Mammel M.K."/>
            <person name="Leclerc J.E."/>
            <person name="Ravel J."/>
            <person name="Cebula T.A."/>
        </authorList>
    </citation>
    <scope>NUCLEOTIDE SEQUENCE [LARGE SCALE GENOMIC DNA]</scope>
    <source>
        <strain>EC4115 / EHEC</strain>
    </source>
</reference>
<sequence length="294" mass="31541">MHPRFQTAFAQLADNLQSALEPILADKYFPALLTGEQVSSLKSATGLDEDALAFALLPLAAACARTPLSNFNVGAIARGVSGTWYFGANMEFIGATMQQTVHAEQSAISHAWLSGEKALAAITVNYTPCGHCRQFMNELNSGLDLRIHLPGREAHALRDYLADAFGPKDLEIKTLLMDEQDHGYALTGDALSQAAIAAANRSHMPYSKSPSGVALECKDGRIFSGSYAENAAFNPTLPPLQGALILLNLKGYDYPDIQRAVLAEKADAPLIQWDATSATLKALGCHNIDRVLLA</sequence>
<evidence type="ECO:0000255" key="1">
    <source>
        <dbReference type="HAMAP-Rule" id="MF_01558"/>
    </source>
</evidence>
<evidence type="ECO:0000255" key="2">
    <source>
        <dbReference type="PROSITE-ProRule" id="PRU01083"/>
    </source>
</evidence>
<feature type="chain" id="PRO_1000147096" description="Cytidine deaminase">
    <location>
        <begin position="1"/>
        <end position="294"/>
    </location>
</feature>
<feature type="domain" description="CMP/dCMP-type deaminase 1" evidence="2">
    <location>
        <begin position="48"/>
        <end position="168"/>
    </location>
</feature>
<feature type="domain" description="CMP/dCMP-type deaminase 2" evidence="2">
    <location>
        <begin position="186"/>
        <end position="294"/>
    </location>
</feature>
<feature type="active site" description="Proton donor" evidence="1">
    <location>
        <position position="104"/>
    </location>
</feature>
<feature type="binding site" evidence="1">
    <location>
        <begin position="89"/>
        <end position="91"/>
    </location>
    <ligand>
        <name>substrate</name>
    </ligand>
</feature>
<feature type="binding site" evidence="1">
    <location>
        <position position="102"/>
    </location>
    <ligand>
        <name>Zn(2+)</name>
        <dbReference type="ChEBI" id="CHEBI:29105"/>
        <note>catalytic</note>
    </ligand>
</feature>
<feature type="binding site" evidence="1">
    <location>
        <position position="129"/>
    </location>
    <ligand>
        <name>Zn(2+)</name>
        <dbReference type="ChEBI" id="CHEBI:29105"/>
        <note>catalytic</note>
    </ligand>
</feature>
<feature type="binding site" evidence="1">
    <location>
        <position position="132"/>
    </location>
    <ligand>
        <name>Zn(2+)</name>
        <dbReference type="ChEBI" id="CHEBI:29105"/>
        <note>catalytic</note>
    </ligand>
</feature>
<organism>
    <name type="scientific">Escherichia coli O157:H7 (strain EC4115 / EHEC)</name>
    <dbReference type="NCBI Taxonomy" id="444450"/>
    <lineage>
        <taxon>Bacteria</taxon>
        <taxon>Pseudomonadati</taxon>
        <taxon>Pseudomonadota</taxon>
        <taxon>Gammaproteobacteria</taxon>
        <taxon>Enterobacterales</taxon>
        <taxon>Enterobacteriaceae</taxon>
        <taxon>Escherichia</taxon>
    </lineage>
</organism>
<keyword id="KW-0378">Hydrolase</keyword>
<keyword id="KW-0479">Metal-binding</keyword>
<keyword id="KW-0862">Zinc</keyword>
<proteinExistence type="inferred from homology"/>
<name>CDD_ECO5E</name>
<protein>
    <recommendedName>
        <fullName evidence="1">Cytidine deaminase</fullName>
        <ecNumber evidence="1">3.5.4.5</ecNumber>
    </recommendedName>
    <alternativeName>
        <fullName evidence="1">Cytidine aminohydrolase</fullName>
        <shortName evidence="1">CDA</shortName>
    </alternativeName>
</protein>
<dbReference type="EC" id="3.5.4.5" evidence="1"/>
<dbReference type="EMBL" id="CP001164">
    <property type="protein sequence ID" value="ACI36554.1"/>
    <property type="molecule type" value="Genomic_DNA"/>
</dbReference>
<dbReference type="RefSeq" id="WP_000553550.1">
    <property type="nucleotide sequence ID" value="NC_011353.1"/>
</dbReference>
<dbReference type="SMR" id="B5YW75"/>
<dbReference type="KEGG" id="ecf:ECH74115_3275"/>
<dbReference type="HOGENOM" id="CLU_052424_0_0_6"/>
<dbReference type="GO" id="GO:0005829">
    <property type="term" value="C:cytosol"/>
    <property type="evidence" value="ECO:0007669"/>
    <property type="project" value="TreeGrafter"/>
</dbReference>
<dbReference type="GO" id="GO:0004126">
    <property type="term" value="F:cytidine deaminase activity"/>
    <property type="evidence" value="ECO:0007669"/>
    <property type="project" value="UniProtKB-UniRule"/>
</dbReference>
<dbReference type="GO" id="GO:0042802">
    <property type="term" value="F:identical protein binding"/>
    <property type="evidence" value="ECO:0007669"/>
    <property type="project" value="UniProtKB-ARBA"/>
</dbReference>
<dbReference type="GO" id="GO:0008270">
    <property type="term" value="F:zinc ion binding"/>
    <property type="evidence" value="ECO:0007669"/>
    <property type="project" value="UniProtKB-UniRule"/>
</dbReference>
<dbReference type="GO" id="GO:0009972">
    <property type="term" value="P:cytidine deamination"/>
    <property type="evidence" value="ECO:0007669"/>
    <property type="project" value="InterPro"/>
</dbReference>
<dbReference type="CDD" id="cd01283">
    <property type="entry name" value="cytidine_deaminase"/>
    <property type="match status" value="2"/>
</dbReference>
<dbReference type="FunFam" id="3.40.140.10:FF:000006">
    <property type="entry name" value="Cytidine deaminase"/>
    <property type="match status" value="1"/>
</dbReference>
<dbReference type="FunFam" id="3.40.140.10:FF:000007">
    <property type="entry name" value="Cytidine deaminase"/>
    <property type="match status" value="1"/>
</dbReference>
<dbReference type="Gene3D" id="3.40.140.10">
    <property type="entry name" value="Cytidine Deaminase, domain 2"/>
    <property type="match status" value="2"/>
</dbReference>
<dbReference type="HAMAP" id="MF_01558">
    <property type="entry name" value="Cyt_deam"/>
    <property type="match status" value="1"/>
</dbReference>
<dbReference type="InterPro" id="IPR016192">
    <property type="entry name" value="APOBEC/CMP_deaminase_Zn-bd"/>
</dbReference>
<dbReference type="InterPro" id="IPR002125">
    <property type="entry name" value="CMP_dCMP_dom"/>
</dbReference>
<dbReference type="InterPro" id="IPR013171">
    <property type="entry name" value="Cyd/dCyd_deaminase_Zn-bd"/>
</dbReference>
<dbReference type="InterPro" id="IPR050202">
    <property type="entry name" value="Cyt/Deoxycyt_deaminase"/>
</dbReference>
<dbReference type="InterPro" id="IPR006263">
    <property type="entry name" value="Cyt_deam_dimer"/>
</dbReference>
<dbReference type="InterPro" id="IPR016193">
    <property type="entry name" value="Cytidine_deaminase-like"/>
</dbReference>
<dbReference type="InterPro" id="IPR020797">
    <property type="entry name" value="Cytidine_deaminase_bacteria"/>
</dbReference>
<dbReference type="NCBIfam" id="TIGR01355">
    <property type="entry name" value="cyt_deam_dimer"/>
    <property type="match status" value="1"/>
</dbReference>
<dbReference type="NCBIfam" id="NF006537">
    <property type="entry name" value="PRK09027.1"/>
    <property type="match status" value="1"/>
</dbReference>
<dbReference type="PANTHER" id="PTHR11644">
    <property type="entry name" value="CYTIDINE DEAMINASE"/>
    <property type="match status" value="1"/>
</dbReference>
<dbReference type="PANTHER" id="PTHR11644:SF2">
    <property type="entry name" value="CYTIDINE DEAMINASE"/>
    <property type="match status" value="1"/>
</dbReference>
<dbReference type="Pfam" id="PF00383">
    <property type="entry name" value="dCMP_cyt_deam_1"/>
    <property type="match status" value="1"/>
</dbReference>
<dbReference type="Pfam" id="PF08211">
    <property type="entry name" value="dCMP_cyt_deam_2"/>
    <property type="match status" value="1"/>
</dbReference>
<dbReference type="PIRSF" id="PIRSF006334">
    <property type="entry name" value="Cdd_plus_pseudo"/>
    <property type="match status" value="1"/>
</dbReference>
<dbReference type="SUPFAM" id="SSF53927">
    <property type="entry name" value="Cytidine deaminase-like"/>
    <property type="match status" value="2"/>
</dbReference>
<dbReference type="PROSITE" id="PS00903">
    <property type="entry name" value="CYT_DCMP_DEAMINASES_1"/>
    <property type="match status" value="1"/>
</dbReference>
<dbReference type="PROSITE" id="PS51747">
    <property type="entry name" value="CYT_DCMP_DEAMINASES_2"/>
    <property type="match status" value="2"/>
</dbReference>